<comment type="function">
    <text evidence="1">Involved in protein export. Acts as a chaperone by maintaining the newly synthesized protein in an open conformation. Functions as a peptidyl-prolyl cis-trans isomerase.</text>
</comment>
<comment type="catalytic activity">
    <reaction evidence="1">
        <text>[protein]-peptidylproline (omega=180) = [protein]-peptidylproline (omega=0)</text>
        <dbReference type="Rhea" id="RHEA:16237"/>
        <dbReference type="Rhea" id="RHEA-COMP:10747"/>
        <dbReference type="Rhea" id="RHEA-COMP:10748"/>
        <dbReference type="ChEBI" id="CHEBI:83833"/>
        <dbReference type="ChEBI" id="CHEBI:83834"/>
        <dbReference type="EC" id="5.2.1.8"/>
    </reaction>
</comment>
<comment type="subcellular location">
    <subcellularLocation>
        <location>Cytoplasm</location>
    </subcellularLocation>
    <text evidence="1">About half TF is bound to the ribosome near the polypeptide exit tunnel while the other half is free in the cytoplasm.</text>
</comment>
<comment type="domain">
    <text evidence="1">Consists of 3 domains; the N-terminus binds the ribosome, the middle domain has PPIase activity, while the C-terminus has intrinsic chaperone activity on its own.</text>
</comment>
<comment type="similarity">
    <text evidence="1">Belongs to the FKBP-type PPIase family. Tig subfamily.</text>
</comment>
<feature type="chain" id="PRO_0000179411" description="Trigger factor">
    <location>
        <begin position="1"/>
        <end position="492"/>
    </location>
</feature>
<feature type="domain" description="PPIase FKBP-type" evidence="1">
    <location>
        <begin position="169"/>
        <end position="254"/>
    </location>
</feature>
<feature type="region of interest" description="Disordered" evidence="2">
    <location>
        <begin position="441"/>
        <end position="492"/>
    </location>
</feature>
<feature type="compositionally biased region" description="Basic and acidic residues" evidence="2">
    <location>
        <begin position="463"/>
        <end position="479"/>
    </location>
</feature>
<feature type="compositionally biased region" description="Basic residues" evidence="2">
    <location>
        <begin position="480"/>
        <end position="492"/>
    </location>
</feature>
<organism>
    <name type="scientific">Mesorhizobium japonicum (strain LMG 29417 / CECT 9101 / MAFF 303099)</name>
    <name type="common">Mesorhizobium loti (strain MAFF 303099)</name>
    <dbReference type="NCBI Taxonomy" id="266835"/>
    <lineage>
        <taxon>Bacteria</taxon>
        <taxon>Pseudomonadati</taxon>
        <taxon>Pseudomonadota</taxon>
        <taxon>Alphaproteobacteria</taxon>
        <taxon>Hyphomicrobiales</taxon>
        <taxon>Phyllobacteriaceae</taxon>
        <taxon>Mesorhizobium</taxon>
    </lineage>
</organism>
<reference key="1">
    <citation type="journal article" date="2000" name="DNA Res.">
        <title>Complete genome structure of the nitrogen-fixing symbiotic bacterium Mesorhizobium loti.</title>
        <authorList>
            <person name="Kaneko T."/>
            <person name="Nakamura Y."/>
            <person name="Sato S."/>
            <person name="Asamizu E."/>
            <person name="Kato T."/>
            <person name="Sasamoto S."/>
            <person name="Watanabe A."/>
            <person name="Idesawa K."/>
            <person name="Ishikawa A."/>
            <person name="Kawashima K."/>
            <person name="Kimura T."/>
            <person name="Kishida Y."/>
            <person name="Kiyokawa C."/>
            <person name="Kohara M."/>
            <person name="Matsumoto M."/>
            <person name="Matsuno A."/>
            <person name="Mochizuki Y."/>
            <person name="Nakayama S."/>
            <person name="Nakazaki N."/>
            <person name="Shimpo S."/>
            <person name="Sugimoto M."/>
            <person name="Takeuchi C."/>
            <person name="Yamada M."/>
            <person name="Tabata S."/>
        </authorList>
    </citation>
    <scope>NUCLEOTIDE SEQUENCE [LARGE SCALE GENOMIC DNA]</scope>
    <source>
        <strain>LMG 29417 / CECT 9101 / MAFF 303099</strain>
    </source>
</reference>
<name>TIG_RHILO</name>
<protein>
    <recommendedName>
        <fullName evidence="1">Trigger factor</fullName>
        <shortName evidence="1">TF</shortName>
        <ecNumber evidence="1">5.2.1.8</ecNumber>
    </recommendedName>
    <alternativeName>
        <fullName evidence="1">PPIase</fullName>
    </alternativeName>
</protein>
<gene>
    <name evidence="1" type="primary">tig</name>
    <name type="ordered locus">mll1054</name>
</gene>
<evidence type="ECO:0000255" key="1">
    <source>
        <dbReference type="HAMAP-Rule" id="MF_00303"/>
    </source>
</evidence>
<evidence type="ECO:0000256" key="2">
    <source>
        <dbReference type="SAM" id="MobiDB-lite"/>
    </source>
</evidence>
<sequence length="492" mass="54646">MQVTETLNSGLKREIKITVPAGDMEAKLMARLSDARNKVRINGFRPGKVPVQHLRKVYGKSFMAEVVNEILNDSTRSIITGRGEKAAMQPEVIMTEDEKEAEKILAGGTDFEFRLNYEVIPAIEIKDFSDIKVTRQVFDVPDAEIDDQVKRVAESARSYEPKTGKAAEGDRVSIDYVGKIDGEAFAGGAGTDQLLVLGSKEFIPGFEDQLIGTKAGDEKQVTVTFPENYQAAHLAGKEATFDVTVKEVSKPGELEINDETAKNLGLESLERLREIVRGQIENQFGSMTRQKVKRQLLDQLDAAYSFEAPSKLIDAEFNNIWAQVTRDLEAAGRTFADEETTEEEARAEYLRLAERRVRLGLVLAEIGEKAGVTVSDEELQRGLFEQVRRFPANQQQEAFEFYRSNPEALNALRAPMFEEKVVDHLLGQISVTDVKVSKEELMADDEDAETTTKAKPAKKAAAKKAEAKANEDEAEEPKKKAAPKKKAAKDAE</sequence>
<keyword id="KW-0131">Cell cycle</keyword>
<keyword id="KW-0132">Cell division</keyword>
<keyword id="KW-0143">Chaperone</keyword>
<keyword id="KW-0963">Cytoplasm</keyword>
<keyword id="KW-0413">Isomerase</keyword>
<keyword id="KW-0697">Rotamase</keyword>
<proteinExistence type="inferred from homology"/>
<dbReference type="EC" id="5.2.1.8" evidence="1"/>
<dbReference type="EMBL" id="BA000012">
    <property type="protein sequence ID" value="BAB48515.1"/>
    <property type="molecule type" value="Genomic_DNA"/>
</dbReference>
<dbReference type="RefSeq" id="WP_010909869.1">
    <property type="nucleotide sequence ID" value="NC_002678.2"/>
</dbReference>
<dbReference type="SMR" id="Q98LE8"/>
<dbReference type="GeneID" id="66683725"/>
<dbReference type="KEGG" id="mlo:mll1054"/>
<dbReference type="eggNOG" id="COG0544">
    <property type="taxonomic scope" value="Bacteria"/>
</dbReference>
<dbReference type="HOGENOM" id="CLU_033058_2_2_5"/>
<dbReference type="Proteomes" id="UP000000552">
    <property type="component" value="Chromosome"/>
</dbReference>
<dbReference type="GO" id="GO:0005737">
    <property type="term" value="C:cytoplasm"/>
    <property type="evidence" value="ECO:0007669"/>
    <property type="project" value="UniProtKB-SubCell"/>
</dbReference>
<dbReference type="GO" id="GO:0003755">
    <property type="term" value="F:peptidyl-prolyl cis-trans isomerase activity"/>
    <property type="evidence" value="ECO:0007669"/>
    <property type="project" value="UniProtKB-UniRule"/>
</dbReference>
<dbReference type="GO" id="GO:0044183">
    <property type="term" value="F:protein folding chaperone"/>
    <property type="evidence" value="ECO:0007669"/>
    <property type="project" value="TreeGrafter"/>
</dbReference>
<dbReference type="GO" id="GO:0043022">
    <property type="term" value="F:ribosome binding"/>
    <property type="evidence" value="ECO:0007669"/>
    <property type="project" value="TreeGrafter"/>
</dbReference>
<dbReference type="GO" id="GO:0051083">
    <property type="term" value="P:'de novo' cotranslational protein folding"/>
    <property type="evidence" value="ECO:0007669"/>
    <property type="project" value="TreeGrafter"/>
</dbReference>
<dbReference type="GO" id="GO:0051301">
    <property type="term" value="P:cell division"/>
    <property type="evidence" value="ECO:0007669"/>
    <property type="project" value="UniProtKB-KW"/>
</dbReference>
<dbReference type="GO" id="GO:0061077">
    <property type="term" value="P:chaperone-mediated protein folding"/>
    <property type="evidence" value="ECO:0007669"/>
    <property type="project" value="TreeGrafter"/>
</dbReference>
<dbReference type="GO" id="GO:0015031">
    <property type="term" value="P:protein transport"/>
    <property type="evidence" value="ECO:0007669"/>
    <property type="project" value="UniProtKB-UniRule"/>
</dbReference>
<dbReference type="GO" id="GO:0043335">
    <property type="term" value="P:protein unfolding"/>
    <property type="evidence" value="ECO:0007669"/>
    <property type="project" value="TreeGrafter"/>
</dbReference>
<dbReference type="FunFam" id="3.10.50.40:FF:000001">
    <property type="entry name" value="Trigger factor"/>
    <property type="match status" value="1"/>
</dbReference>
<dbReference type="Gene3D" id="3.10.50.40">
    <property type="match status" value="1"/>
</dbReference>
<dbReference type="Gene3D" id="3.30.70.1050">
    <property type="entry name" value="Trigger factor ribosome-binding domain"/>
    <property type="match status" value="1"/>
</dbReference>
<dbReference type="Gene3D" id="1.10.3120.10">
    <property type="entry name" value="Trigger factor, C-terminal domain"/>
    <property type="match status" value="1"/>
</dbReference>
<dbReference type="HAMAP" id="MF_00303">
    <property type="entry name" value="Trigger_factor_Tig"/>
    <property type="match status" value="1"/>
</dbReference>
<dbReference type="InterPro" id="IPR046357">
    <property type="entry name" value="PPIase_dom_sf"/>
</dbReference>
<dbReference type="InterPro" id="IPR001179">
    <property type="entry name" value="PPIase_FKBP_dom"/>
</dbReference>
<dbReference type="InterPro" id="IPR005215">
    <property type="entry name" value="Trig_fac"/>
</dbReference>
<dbReference type="InterPro" id="IPR008880">
    <property type="entry name" value="Trigger_fac_C"/>
</dbReference>
<dbReference type="InterPro" id="IPR037041">
    <property type="entry name" value="Trigger_fac_C_sf"/>
</dbReference>
<dbReference type="InterPro" id="IPR008881">
    <property type="entry name" value="Trigger_fac_ribosome-bd_bac"/>
</dbReference>
<dbReference type="InterPro" id="IPR036611">
    <property type="entry name" value="Trigger_fac_ribosome-bd_sf"/>
</dbReference>
<dbReference type="InterPro" id="IPR027304">
    <property type="entry name" value="Trigger_fact/SurA_dom_sf"/>
</dbReference>
<dbReference type="NCBIfam" id="TIGR00115">
    <property type="entry name" value="tig"/>
    <property type="match status" value="1"/>
</dbReference>
<dbReference type="PANTHER" id="PTHR30560">
    <property type="entry name" value="TRIGGER FACTOR CHAPERONE AND PEPTIDYL-PROLYL CIS/TRANS ISOMERASE"/>
    <property type="match status" value="1"/>
</dbReference>
<dbReference type="PANTHER" id="PTHR30560:SF3">
    <property type="entry name" value="TRIGGER FACTOR-LIKE PROTEIN TIG, CHLOROPLASTIC"/>
    <property type="match status" value="1"/>
</dbReference>
<dbReference type="Pfam" id="PF00254">
    <property type="entry name" value="FKBP_C"/>
    <property type="match status" value="1"/>
</dbReference>
<dbReference type="Pfam" id="PF05698">
    <property type="entry name" value="Trigger_C"/>
    <property type="match status" value="1"/>
</dbReference>
<dbReference type="Pfam" id="PF05697">
    <property type="entry name" value="Trigger_N"/>
    <property type="match status" value="1"/>
</dbReference>
<dbReference type="PIRSF" id="PIRSF003095">
    <property type="entry name" value="Trigger_factor"/>
    <property type="match status" value="1"/>
</dbReference>
<dbReference type="SUPFAM" id="SSF54534">
    <property type="entry name" value="FKBP-like"/>
    <property type="match status" value="1"/>
</dbReference>
<dbReference type="SUPFAM" id="SSF109998">
    <property type="entry name" value="Triger factor/SurA peptide-binding domain-like"/>
    <property type="match status" value="1"/>
</dbReference>
<dbReference type="SUPFAM" id="SSF102735">
    <property type="entry name" value="Trigger factor ribosome-binding domain"/>
    <property type="match status" value="1"/>
</dbReference>
<dbReference type="PROSITE" id="PS50059">
    <property type="entry name" value="FKBP_PPIASE"/>
    <property type="match status" value="1"/>
</dbReference>
<accession>Q98LE8</accession>